<proteinExistence type="inferred from homology"/>
<keyword id="KW-0012">Acyltransferase</keyword>
<keyword id="KW-0441">Lipid A biosynthesis</keyword>
<keyword id="KW-0444">Lipid biosynthesis</keyword>
<keyword id="KW-0443">Lipid metabolism</keyword>
<keyword id="KW-0677">Repeat</keyword>
<keyword id="KW-0808">Transferase</keyword>
<organism>
    <name type="scientific">Acinetobacter baumannii (strain AB307-0294)</name>
    <dbReference type="NCBI Taxonomy" id="557600"/>
    <lineage>
        <taxon>Bacteria</taxon>
        <taxon>Pseudomonadati</taxon>
        <taxon>Pseudomonadota</taxon>
        <taxon>Gammaproteobacteria</taxon>
        <taxon>Moraxellales</taxon>
        <taxon>Moraxellaceae</taxon>
        <taxon>Acinetobacter</taxon>
        <taxon>Acinetobacter calcoaceticus/baumannii complex</taxon>
    </lineage>
</organism>
<comment type="function">
    <text evidence="1">Catalyzes the N-acylation of UDP-3-O-acylglucosamine using 3-hydroxyacyl-ACP as the acyl donor. Is involved in the biosynthesis of lipid A, a phosphorylated glycolipid that anchors the lipopolysaccharide to the outer membrane of the cell.</text>
</comment>
<comment type="catalytic activity">
    <reaction evidence="1">
        <text>a UDP-3-O-[(3R)-3-hydroxyacyl]-alpha-D-glucosamine + a (3R)-hydroxyacyl-[ACP] = a UDP-2-N,3-O-bis[(3R)-3-hydroxyacyl]-alpha-D-glucosamine + holo-[ACP] + H(+)</text>
        <dbReference type="Rhea" id="RHEA:53836"/>
        <dbReference type="Rhea" id="RHEA-COMP:9685"/>
        <dbReference type="Rhea" id="RHEA-COMP:9945"/>
        <dbReference type="ChEBI" id="CHEBI:15378"/>
        <dbReference type="ChEBI" id="CHEBI:64479"/>
        <dbReference type="ChEBI" id="CHEBI:78827"/>
        <dbReference type="ChEBI" id="CHEBI:137740"/>
        <dbReference type="ChEBI" id="CHEBI:137748"/>
        <dbReference type="EC" id="2.3.1.191"/>
    </reaction>
</comment>
<comment type="pathway">
    <text evidence="1">Bacterial outer membrane biogenesis; LPS lipid A biosynthesis.</text>
</comment>
<comment type="subunit">
    <text evidence="1">Homotrimer.</text>
</comment>
<comment type="similarity">
    <text evidence="1">Belongs to the transferase hexapeptide repeat family. LpxD subfamily.</text>
</comment>
<feature type="chain" id="PRO_1000127653" description="UDP-3-O-acylglucosamine N-acyltransferase">
    <location>
        <begin position="1"/>
        <end position="356"/>
    </location>
</feature>
<feature type="active site" description="Proton acceptor" evidence="1">
    <location>
        <position position="242"/>
    </location>
</feature>
<gene>
    <name evidence="1" type="primary">lpxD</name>
    <name type="ordered locus">ABBFA_001479</name>
</gene>
<name>LPXD_ACIB3</name>
<sequence>MKVQQYRLDELAHLVKGELIGEGSLQFSNLASLENAEVNHLTFVNGEKHLDQAKVSRAGAYIVTAALKEHLPEKDNFIIVDNPYLAFAILTHVFDKKISSTGIESTAQIHPSAVISETAYIGHYVVIGENCVVGDNTVIQSHTKLDDNVEVGKDCFIDSHVTITGGSKLRDRVRIHSSTVIGGEGFGFAPYQGKWHRIAQLGSVLIGNDVRIGSNCSIDRGALDNTILEDGVIIDNLVQIAHNVHIGSNTAIAAKCGIAGSTKIGKNCILAGACGVAGHLSIADNVTLTGMSMVTKNISEAGTYSSGTGLFENNHWKKTIVRLRQLADVPLTQITKRLDHIQAQIESLESTFNLRK</sequence>
<reference key="1">
    <citation type="journal article" date="2008" name="J. Bacteriol.">
        <title>Comparative genome sequence analysis of multidrug-resistant Acinetobacter baumannii.</title>
        <authorList>
            <person name="Adams M.D."/>
            <person name="Goglin K."/>
            <person name="Molyneaux N."/>
            <person name="Hujer K.M."/>
            <person name="Lavender H."/>
            <person name="Jamison J.J."/>
            <person name="MacDonald I.J."/>
            <person name="Martin K.M."/>
            <person name="Russo T."/>
            <person name="Campagnari A.A."/>
            <person name="Hujer A.M."/>
            <person name="Bonomo R.A."/>
            <person name="Gill S.R."/>
        </authorList>
    </citation>
    <scope>NUCLEOTIDE SEQUENCE [LARGE SCALE GENOMIC DNA]</scope>
    <source>
        <strain>AB307-0294</strain>
    </source>
</reference>
<protein>
    <recommendedName>
        <fullName evidence="1">UDP-3-O-acylglucosamine N-acyltransferase</fullName>
        <ecNumber evidence="1">2.3.1.191</ecNumber>
    </recommendedName>
</protein>
<accession>B7H1U9</accession>
<evidence type="ECO:0000255" key="1">
    <source>
        <dbReference type="HAMAP-Rule" id="MF_00523"/>
    </source>
</evidence>
<dbReference type="EC" id="2.3.1.191" evidence="1"/>
<dbReference type="EMBL" id="CP001172">
    <property type="protein sequence ID" value="ACJ56798.1"/>
    <property type="molecule type" value="Genomic_DNA"/>
</dbReference>
<dbReference type="RefSeq" id="WP_000868103.1">
    <property type="nucleotide sequence ID" value="NZ_CP001172.1"/>
</dbReference>
<dbReference type="SMR" id="B7H1U9"/>
<dbReference type="GeneID" id="92894229"/>
<dbReference type="HOGENOM" id="CLU_049865_0_1_6"/>
<dbReference type="UniPathway" id="UPA00973"/>
<dbReference type="Proteomes" id="UP000006924">
    <property type="component" value="Chromosome"/>
</dbReference>
<dbReference type="GO" id="GO:0016020">
    <property type="term" value="C:membrane"/>
    <property type="evidence" value="ECO:0007669"/>
    <property type="project" value="GOC"/>
</dbReference>
<dbReference type="GO" id="GO:0016410">
    <property type="term" value="F:N-acyltransferase activity"/>
    <property type="evidence" value="ECO:0007669"/>
    <property type="project" value="InterPro"/>
</dbReference>
<dbReference type="GO" id="GO:0009245">
    <property type="term" value="P:lipid A biosynthetic process"/>
    <property type="evidence" value="ECO:0007669"/>
    <property type="project" value="UniProtKB-UniRule"/>
</dbReference>
<dbReference type="CDD" id="cd03352">
    <property type="entry name" value="LbH_LpxD"/>
    <property type="match status" value="1"/>
</dbReference>
<dbReference type="Gene3D" id="1.20.5.170">
    <property type="match status" value="1"/>
</dbReference>
<dbReference type="Gene3D" id="2.160.10.10">
    <property type="entry name" value="Hexapeptide repeat proteins"/>
    <property type="match status" value="1"/>
</dbReference>
<dbReference type="Gene3D" id="3.40.1390.10">
    <property type="entry name" value="MurE/MurF, N-terminal domain"/>
    <property type="match status" value="1"/>
</dbReference>
<dbReference type="HAMAP" id="MF_00523">
    <property type="entry name" value="LpxD"/>
    <property type="match status" value="1"/>
</dbReference>
<dbReference type="InterPro" id="IPR001451">
    <property type="entry name" value="Hexapep"/>
</dbReference>
<dbReference type="InterPro" id="IPR007691">
    <property type="entry name" value="LpxD"/>
</dbReference>
<dbReference type="InterPro" id="IPR011004">
    <property type="entry name" value="Trimer_LpxA-like_sf"/>
</dbReference>
<dbReference type="InterPro" id="IPR020573">
    <property type="entry name" value="UDP_GlcNAc_AcTrfase_non-rep"/>
</dbReference>
<dbReference type="NCBIfam" id="TIGR01853">
    <property type="entry name" value="lipid_A_lpxD"/>
    <property type="match status" value="1"/>
</dbReference>
<dbReference type="NCBIfam" id="NF002060">
    <property type="entry name" value="PRK00892.1"/>
    <property type="match status" value="1"/>
</dbReference>
<dbReference type="PANTHER" id="PTHR43378">
    <property type="entry name" value="UDP-3-O-ACYLGLUCOSAMINE N-ACYLTRANSFERASE"/>
    <property type="match status" value="1"/>
</dbReference>
<dbReference type="PANTHER" id="PTHR43378:SF2">
    <property type="entry name" value="UDP-3-O-ACYLGLUCOSAMINE N-ACYLTRANSFERASE 1, MITOCHONDRIAL-RELATED"/>
    <property type="match status" value="1"/>
</dbReference>
<dbReference type="Pfam" id="PF00132">
    <property type="entry name" value="Hexapep"/>
    <property type="match status" value="2"/>
</dbReference>
<dbReference type="Pfam" id="PF04613">
    <property type="entry name" value="LpxD"/>
    <property type="match status" value="1"/>
</dbReference>
<dbReference type="SUPFAM" id="SSF51161">
    <property type="entry name" value="Trimeric LpxA-like enzymes"/>
    <property type="match status" value="1"/>
</dbReference>